<keyword id="KW-1185">Reference proteome</keyword>
<keyword id="KW-0843">Virulence</keyword>
<accession>J5JHE8</accession>
<protein>
    <recommendedName>
        <fullName evidence="3">Secreted LysM effector Blys4</fullName>
    </recommendedName>
    <alternativeName>
        <fullName evidence="3">LysM domain-containing protein 4</fullName>
    </alternativeName>
</protein>
<reference key="1">
    <citation type="journal article" date="2012" name="Sci. Rep.">
        <title>Genomic perspectives on the evolution of fungal entomopathogenicity in Beauveria bassiana.</title>
        <authorList>
            <person name="Xiao G."/>
            <person name="Ying S.-H."/>
            <person name="Zheng P."/>
            <person name="Wang Z.-L."/>
            <person name="Zhang S."/>
            <person name="Xie X.-Q."/>
            <person name="Shang Y."/>
            <person name="St Leger R.J."/>
            <person name="Zhao G.-P."/>
            <person name="Wang C."/>
            <person name="Feng M.-G."/>
        </authorList>
    </citation>
    <scope>NUCLEOTIDE SEQUENCE [LARGE SCALE GENOMIC DNA]</scope>
    <source>
        <strain>ARSEF 2860</strain>
    </source>
</reference>
<reference key="2">
    <citation type="journal article" date="2017" name="PLoS Pathog.">
        <title>Divergent LysM effectors contribute to the virulence of Beauveria bassiana by evasion of insect immune defenses.</title>
        <authorList>
            <person name="Cen K."/>
            <person name="Li B."/>
            <person name="Lu Y."/>
            <person name="Zhang S."/>
            <person name="Wang C."/>
        </authorList>
    </citation>
    <scope>FUNCTION</scope>
    <scope>INDUCTION</scope>
    <scope>DISRUPTION PHENOTYPE</scope>
</reference>
<name>LYSM4_BEAB2</name>
<dbReference type="EMBL" id="JH725165">
    <property type="protein sequence ID" value="EJP65083.1"/>
    <property type="molecule type" value="Genomic_DNA"/>
</dbReference>
<dbReference type="RefSeq" id="XP_008599172.1">
    <property type="nucleotide sequence ID" value="XM_008600950.1"/>
</dbReference>
<dbReference type="SMR" id="J5JHE8"/>
<dbReference type="STRING" id="655819.J5JHE8"/>
<dbReference type="GeneID" id="19888865"/>
<dbReference type="HOGENOM" id="CLU_090055_0_0_1"/>
<dbReference type="InParanoid" id="J5JHE8"/>
<dbReference type="OrthoDB" id="68at474943"/>
<dbReference type="PHI-base" id="PHI:7377"/>
<dbReference type="Proteomes" id="UP000002762">
    <property type="component" value="Unassembled WGS sequence"/>
</dbReference>
<dbReference type="CDD" id="cd00118">
    <property type="entry name" value="LysM"/>
    <property type="match status" value="1"/>
</dbReference>
<dbReference type="Gene3D" id="3.10.350.10">
    <property type="entry name" value="LysM domain"/>
    <property type="match status" value="1"/>
</dbReference>
<dbReference type="InterPro" id="IPR018392">
    <property type="entry name" value="LysM_dom"/>
</dbReference>
<dbReference type="InterPro" id="IPR036779">
    <property type="entry name" value="LysM_dom_sf"/>
</dbReference>
<dbReference type="Pfam" id="PF01476">
    <property type="entry name" value="LysM"/>
    <property type="match status" value="1"/>
</dbReference>
<dbReference type="SMART" id="SM00257">
    <property type="entry name" value="LysM"/>
    <property type="match status" value="1"/>
</dbReference>
<dbReference type="SUPFAM" id="SSF54106">
    <property type="entry name" value="LysM domain"/>
    <property type="match status" value="1"/>
</dbReference>
<dbReference type="PROSITE" id="PS51782">
    <property type="entry name" value="LYSM"/>
    <property type="match status" value="1"/>
</dbReference>
<comment type="function">
    <text evidence="5">Might have a role in sequestration of chitin oligosaccharides (breakdown products of fungal cell walls that are released during invasion and act as triggers of host immunity) to dampen host defense.</text>
</comment>
<comment type="induction">
    <text evidence="2">Expressed during in vivo infection of insect hosts.</text>
</comment>
<comment type="domain">
    <text evidence="5">The LysM (lysin motif) domains are small globular domains involved in binding chitin in eukaryotes. Blys4 contains one5 LysM domain.</text>
</comment>
<comment type="disruption phenotype">
    <text evidence="2">Does not affect virulence to host insects.</text>
</comment>
<comment type="miscellaneous">
    <text evidence="4">In plants, chitin acts as a microbe-associated molecular pattern (MAMP) that is recognized by lysin motif (LysM)-containing plant cell surface-localized pattern recognition receptors (PRRs) that activate a plethora of downstream immune responses.</text>
</comment>
<comment type="similarity">
    <text evidence="4">Belongs to the secreted LysM effector family.</text>
</comment>
<feature type="chain" id="PRO_0000460643" description="Secreted LysM effector Blys4">
    <location>
        <begin position="1"/>
        <end position="171"/>
    </location>
</feature>
<feature type="domain" description="LysM" evidence="1">
    <location>
        <begin position="125"/>
        <end position="169"/>
    </location>
</feature>
<gene>
    <name evidence="3" type="primary">Blys4</name>
    <name type="ORF">BBA_05853</name>
</gene>
<proteinExistence type="evidence at transcript level"/>
<organism>
    <name type="scientific">Beauveria bassiana (strain ARSEF 2860)</name>
    <name type="common">White muscardine disease fungus</name>
    <name type="synonym">Tritirachium shiotae</name>
    <dbReference type="NCBI Taxonomy" id="655819"/>
    <lineage>
        <taxon>Eukaryota</taxon>
        <taxon>Fungi</taxon>
        <taxon>Dikarya</taxon>
        <taxon>Ascomycota</taxon>
        <taxon>Pezizomycotina</taxon>
        <taxon>Sordariomycetes</taxon>
        <taxon>Hypocreomycetidae</taxon>
        <taxon>Hypocreales</taxon>
        <taxon>Cordycipitaceae</taxon>
        <taxon>Beauveria</taxon>
    </lineage>
</organism>
<evidence type="ECO:0000255" key="1">
    <source>
        <dbReference type="PROSITE-ProRule" id="PRU01118"/>
    </source>
</evidence>
<evidence type="ECO:0000269" key="2">
    <source>
    </source>
</evidence>
<evidence type="ECO:0000303" key="3">
    <source>
    </source>
</evidence>
<evidence type="ECO:0000305" key="4"/>
<evidence type="ECO:0000305" key="5">
    <source>
    </source>
</evidence>
<sequence length="171" mass="18841">MPRRSRYDDDEERLPEGMTRVGYDADTGVYTFQDSDGSYWEGASGSRYGQLTRVGHELAGEDDDAQPFLPSNAHAGPKVSWRHELMPLLNFGVIIGVALLLLWWYLHVAAGPDKGSAQDCPSGTKPYTIHQGDTCWDIAESHSVGVDDILTLNPELDCDKLSIGSQICLKD</sequence>